<evidence type="ECO:0000250" key="1">
    <source>
        <dbReference type="UniProtKB" id="P02768"/>
    </source>
</evidence>
<evidence type="ECO:0000250" key="2">
    <source>
        <dbReference type="UniProtKB" id="P02769"/>
    </source>
</evidence>
<evidence type="ECO:0000250" key="3">
    <source>
        <dbReference type="UniProtKB" id="P07724"/>
    </source>
</evidence>
<evidence type="ECO:0000255" key="4"/>
<evidence type="ECO:0000255" key="5">
    <source>
        <dbReference type="PROSITE-ProRule" id="PRU00769"/>
    </source>
</evidence>
<evidence type="ECO:0000269" key="6">
    <source ref="1"/>
</evidence>
<evidence type="ECO:0000305" key="7"/>
<proteinExistence type="evidence at protein level"/>
<sequence length="90" mass="10055">DTHKSEIAHRFNDLGRHPEYAVSVLLRHLVDEPQNLIKKHGEYGFQNALIVRXXXKAPQVSTPTLVEISRKQTALVELLKLVASTQAALA</sequence>
<protein>
    <recommendedName>
        <fullName>Albumin</fullName>
    </recommendedName>
</protein>
<name>ALBU_CAPHI</name>
<accession>P85295</accession>
<keyword id="KW-0106">Calcium</keyword>
<keyword id="KW-0186">Copper</keyword>
<keyword id="KW-0903">Direct protein sequencing</keyword>
<keyword id="KW-0446">Lipid-binding</keyword>
<keyword id="KW-0479">Metal-binding</keyword>
<keyword id="KW-0488">Methylation</keyword>
<keyword id="KW-0597">Phosphoprotein</keyword>
<keyword id="KW-1185">Reference proteome</keyword>
<keyword id="KW-0677">Repeat</keyword>
<keyword id="KW-0964">Secreted</keyword>
<keyword id="KW-0862">Zinc</keyword>
<comment type="function">
    <text evidence="1 2">Binds water, Ca(2+), Na(+), K(+), fatty acids, hormones, bilirubin and drugs. Its main function is the regulation of the colloidal osmotic pressure of blood. Major zinc transporter in plasma, typically binds about 80% of all plasma zinc (By similarity). Major calcium and magnesium transporter in plasma, binds approximately 45% of circulating calcium and magnesium in plasma (By similarity). Potentially has more than two calcium-binding sites and might additionally bind calcium in a non-specific manner (By similarity). The shared binding site between zinc and calcium suggests a crosstalk between zinc and calcium transport in the blood (By similarity). The rank order of affinity is zinc &gt; calcium &gt; magnesium (By similarity). Binds to the bacterial siderophore enterobactin and inhibits enterobactin-mediated iron uptake of E.coli from ferric transferrin, and may thereby limit the utilization of iron and growth of enteric bacteria such as E.coli (By similarity). Does not prevent iron uptake by the bacterial siderophore aerobactin (By similarity).</text>
</comment>
<comment type="subunit">
    <text evidence="1 3">Interacts with FCGRT; this interaction regulates ALB homeostasis (By similarity). Interacts with TASOR (By similarity). In plasma, occurs in a covalently-linked complex with chromophore-bound alpha-1-microglobulin; this interaction does not prevent fatty acid binding to ALB.</text>
</comment>
<comment type="subcellular location">
    <subcellularLocation>
        <location evidence="7">Secreted</location>
    </subcellularLocation>
</comment>
<comment type="tissue specificity">
    <text evidence="7">Plasma.</text>
</comment>
<comment type="induction">
    <text evidence="6">Up-regulated by fat diet.</text>
</comment>
<comment type="similarity">
    <text evidence="4">Belongs to the ALB/AFP/VDB family.</text>
</comment>
<feature type="chain" id="PRO_0000307919" description="Albumin">
    <location>
        <begin position="1" status="less than"/>
        <end position="90" status="greater than"/>
    </location>
</feature>
<feature type="domain" description="Albumin" evidence="5">
    <location>
        <begin position="25"/>
        <end position="90" status="greater than"/>
    </location>
</feature>
<feature type="binding site" evidence="2">
    <location>
        <position position="6"/>
    </location>
    <ligand>
        <name>Ca(2+)</name>
        <dbReference type="ChEBI" id="CHEBI:29108"/>
        <label>1</label>
    </ligand>
</feature>
<feature type="binding site" evidence="2">
    <location>
        <position position="13"/>
    </location>
    <ligand>
        <name>Ca(2+)</name>
        <dbReference type="ChEBI" id="CHEBI:29108"/>
        <label>2</label>
    </ligand>
</feature>
<feature type="modified residue" description="Phosphoserine" evidence="1">
    <location>
        <position position="5"/>
    </location>
</feature>
<feature type="modified residue" description="Phosphoserine" evidence="1">
    <location>
        <position position="61"/>
    </location>
</feature>
<feature type="modified residue" description="Phosphothreonine" evidence="1">
    <location>
        <position position="62"/>
    </location>
</feature>
<feature type="modified residue" description="Phosphothreonine" evidence="1">
    <location>
        <position position="64"/>
    </location>
</feature>
<feature type="modified residue" description="N6-methyllysine" evidence="1">
    <location>
        <position position="80"/>
    </location>
</feature>
<feature type="unsure residue" description="L or I">
    <location>
        <position position="25"/>
    </location>
</feature>
<feature type="unsure residue" description="L or I">
    <location>
        <position position="26"/>
    </location>
</feature>
<feature type="unsure residue" description="L or I">
    <location>
        <position position="29"/>
    </location>
</feature>
<feature type="unsure residue" description="Q or K">
    <location>
        <position position="34"/>
    </location>
</feature>
<feature type="unsure residue" description="L or I">
    <location>
        <position position="36"/>
    </location>
</feature>
<feature type="unsure residue" description="I or L">
    <location>
        <position position="37"/>
    </location>
</feature>
<feature type="unsure residue" description="K or Q">
    <location>
        <position position="38"/>
    </location>
</feature>
<feature type="unsure residue" description="K or Q">
    <location>
        <position position="39"/>
    </location>
</feature>
<feature type="unsure residue" description="Q or K">
    <location>
        <position position="46"/>
    </location>
</feature>
<feature type="unsure residue" description="L or I">
    <location>
        <position position="49"/>
    </location>
</feature>
<feature type="unsure residue" description="I or L">
    <location>
        <position position="50"/>
    </location>
</feature>
<feature type="unsure residue" description="K or Q">
    <location>
        <position position="56"/>
    </location>
</feature>
<feature type="unsure residue" description="Q or K">
    <location>
        <position position="59"/>
    </location>
</feature>
<feature type="unsure residue" description="L or I">
    <location>
        <position position="65"/>
    </location>
</feature>
<feature type="unsure residue" description="I or L">
    <location>
        <position position="68"/>
    </location>
</feature>
<feature type="unsure residue" description="K or Q">
    <location>
        <position position="71"/>
    </location>
</feature>
<feature type="unsure residue" description="Q or K">
    <location>
        <position position="72"/>
    </location>
</feature>
<feature type="unsure residue" description="L or I">
    <location>
        <position position="75"/>
    </location>
</feature>
<feature type="unsure residue" description="L or I">
    <location>
        <position position="78"/>
    </location>
</feature>
<feature type="unsure residue" description="L or I">
    <location>
        <position position="79"/>
    </location>
</feature>
<feature type="unsure residue" description="K or Q">
    <location>
        <position position="80"/>
    </location>
</feature>
<feature type="unsure residue" description="L or I">
    <location>
        <position position="81"/>
    </location>
</feature>
<feature type="unsure residue" description="Q or K">
    <location>
        <position position="86"/>
    </location>
</feature>
<feature type="unsure residue" description="L or I">
    <location>
        <position position="89"/>
    </location>
</feature>
<feature type="non-consecutive residues" evidence="7">
    <location>
        <begin position="15"/>
        <end position="16"/>
    </location>
</feature>
<feature type="non-consecutive residues" evidence="7">
    <location>
        <begin position="27"/>
        <end position="28"/>
    </location>
</feature>
<feature type="non-consecutive residues" evidence="7">
    <location>
        <begin position="39"/>
        <end position="40"/>
    </location>
</feature>
<feature type="non-consecutive residues" evidence="7">
    <location>
        <begin position="70"/>
        <end position="71"/>
    </location>
</feature>
<feature type="non-consecutive residues" evidence="7">
    <location>
        <begin position="80"/>
        <end position="81"/>
    </location>
</feature>
<feature type="non-terminal residue">
    <location>
        <position position="1"/>
    </location>
</feature>
<feature type="non-terminal residue">
    <location>
        <position position="90"/>
    </location>
</feature>
<gene>
    <name evidence="2" type="primary">ALB</name>
</gene>
<organism>
    <name type="scientific">Capra hircus</name>
    <name type="common">Goat</name>
    <dbReference type="NCBI Taxonomy" id="9925"/>
    <lineage>
        <taxon>Eukaryota</taxon>
        <taxon>Metazoa</taxon>
        <taxon>Chordata</taxon>
        <taxon>Craniata</taxon>
        <taxon>Vertebrata</taxon>
        <taxon>Euteleostomi</taxon>
        <taxon>Mammalia</taxon>
        <taxon>Eutheria</taxon>
        <taxon>Laurasiatheria</taxon>
        <taxon>Artiodactyla</taxon>
        <taxon>Ruminantia</taxon>
        <taxon>Pecora</taxon>
        <taxon>Bovidae</taxon>
        <taxon>Caprinae</taxon>
        <taxon>Capra</taxon>
    </lineage>
</organism>
<reference key="1">
    <citation type="submission" date="2007-10" db="UniProtKB">
        <title>Goat milk proteins induced by some feeding conditions.</title>
        <authorList>
            <person name="Wanigasekera A."/>
            <person name="Hiraga K."/>
        </authorList>
    </citation>
    <scope>PROTEIN SEQUENCE OF 1-15</scope>
    <scope>INDUCTION</scope>
</reference>
<reference key="2">
    <citation type="submission" date="2007-09" db="UniProtKB">
        <title>Access to lower abundant bovine and caprine whey proteins: the impact of caseins and beta-lactoglobulin on proteome analysis.</title>
        <authorList>
            <person name="Koenig S."/>
            <person name="Mehlich A.M."/>
            <person name="Ackermann D."/>
        </authorList>
    </citation>
    <scope>PROTEIN SEQUENCE OF 16-90</scope>
</reference>
<dbReference type="Allergome" id="1496">
    <property type="allergen name" value="Cap h 6"/>
</dbReference>
<dbReference type="Proteomes" id="UP000291000">
    <property type="component" value="Unassembled WGS sequence"/>
</dbReference>
<dbReference type="Proteomes" id="UP000694566">
    <property type="component" value="Unplaced"/>
</dbReference>
<dbReference type="GO" id="GO:0005615">
    <property type="term" value="C:extracellular space"/>
    <property type="evidence" value="ECO:0007669"/>
    <property type="project" value="InterPro"/>
</dbReference>
<dbReference type="GO" id="GO:0008289">
    <property type="term" value="F:lipid binding"/>
    <property type="evidence" value="ECO:0007669"/>
    <property type="project" value="UniProtKB-KW"/>
</dbReference>
<dbReference type="GO" id="GO:0046872">
    <property type="term" value="F:metal ion binding"/>
    <property type="evidence" value="ECO:0007669"/>
    <property type="project" value="UniProtKB-KW"/>
</dbReference>
<dbReference type="InterPro" id="IPR020858">
    <property type="entry name" value="Serum_albumin-like"/>
</dbReference>
<dbReference type="SUPFAM" id="SSF48552">
    <property type="entry name" value="Serum albumin-like"/>
    <property type="match status" value="1"/>
</dbReference>